<protein>
    <recommendedName>
        <fullName evidence="1">Probable cytosol aminopeptidase</fullName>
        <ecNumber evidence="1">3.4.11.1</ecNumber>
    </recommendedName>
    <alternativeName>
        <fullName evidence="1">Leucine aminopeptidase</fullName>
        <shortName evidence="1">LAP</shortName>
        <ecNumber evidence="1">3.4.11.10</ecNumber>
    </alternativeName>
    <alternativeName>
        <fullName evidence="1">Leucyl aminopeptidase</fullName>
    </alternativeName>
</protein>
<feature type="chain" id="PRO_1000019944" description="Probable cytosol aminopeptidase">
    <location>
        <begin position="1"/>
        <end position="518"/>
    </location>
</feature>
<feature type="region of interest" description="Disordered" evidence="2">
    <location>
        <begin position="495"/>
        <end position="518"/>
    </location>
</feature>
<feature type="compositionally biased region" description="Polar residues" evidence="2">
    <location>
        <begin position="495"/>
        <end position="507"/>
    </location>
</feature>
<feature type="active site" evidence="1">
    <location>
        <position position="282"/>
    </location>
</feature>
<feature type="active site" evidence="1">
    <location>
        <position position="356"/>
    </location>
</feature>
<feature type="binding site" evidence="1">
    <location>
        <position position="270"/>
    </location>
    <ligand>
        <name>Mn(2+)</name>
        <dbReference type="ChEBI" id="CHEBI:29035"/>
        <label>2</label>
    </ligand>
</feature>
<feature type="binding site" evidence="1">
    <location>
        <position position="275"/>
    </location>
    <ligand>
        <name>Mn(2+)</name>
        <dbReference type="ChEBI" id="CHEBI:29035"/>
        <label>1</label>
    </ligand>
</feature>
<feature type="binding site" evidence="1">
    <location>
        <position position="275"/>
    </location>
    <ligand>
        <name>Mn(2+)</name>
        <dbReference type="ChEBI" id="CHEBI:29035"/>
        <label>2</label>
    </ligand>
</feature>
<feature type="binding site" evidence="1">
    <location>
        <position position="293"/>
    </location>
    <ligand>
        <name>Mn(2+)</name>
        <dbReference type="ChEBI" id="CHEBI:29035"/>
        <label>2</label>
    </ligand>
</feature>
<feature type="binding site" evidence="1">
    <location>
        <position position="352"/>
    </location>
    <ligand>
        <name>Mn(2+)</name>
        <dbReference type="ChEBI" id="CHEBI:29035"/>
        <label>1</label>
    </ligand>
</feature>
<feature type="binding site" evidence="1">
    <location>
        <position position="354"/>
    </location>
    <ligand>
        <name>Mn(2+)</name>
        <dbReference type="ChEBI" id="CHEBI:29035"/>
        <label>1</label>
    </ligand>
</feature>
<feature type="binding site" evidence="1">
    <location>
        <position position="354"/>
    </location>
    <ligand>
        <name>Mn(2+)</name>
        <dbReference type="ChEBI" id="CHEBI:29035"/>
        <label>2</label>
    </ligand>
</feature>
<proteinExistence type="inferred from homology"/>
<accession>Q2YB18</accession>
<sequence length="518" mass="55476">MKFNIKNGTPEKQRSACVVAGIFEQQKLTPAAEALDKSANGYITGILSRGDMKGKAGATLMLHNVPNSACERVLLVGLGKEQELGDKGYRDAVRAVFKALSDTGAADATLFLLEAPVKNRDLSWKVLQIAVGGLESMYRFDRLKSKVEEAEPKLQKITLGIIKSLTEEEQTASEEALQQGLAVGDGMSLAKDLGNLAPNICTPTYLAEQAMNMAKTYKLKVTVLEQKDMEDLGMGALLAVARGSRQPPKLIALEYWGGAKKGKPVVLVGKGVTFDTGGISLKPAGEMDEMKYDMCGAASVLGTVHAVAKMGLPINVVGIIPATENMPGGNATKPGDVVTSMSGQTIEILNTDAEGRLILCDALAYTERYEPEAVIDIATLTGACVIALGHVASGLLSNDDELARELLDASERAVDRAWRLPLFDEYQEQLKSNFADVANIGGRAAGTITAACFLARFTKKYRWAHLDIAGTAWKSGKEKGATGRPVPLLTQFLISRTTRQPGSTGETGSRKNRRKSKE</sequence>
<gene>
    <name evidence="1" type="primary">pepA</name>
    <name type="ordered locus">Nmul_A0746</name>
</gene>
<name>AMPA_NITMU</name>
<organism>
    <name type="scientific">Nitrosospira multiformis (strain ATCC 25196 / NCIMB 11849 / C 71)</name>
    <dbReference type="NCBI Taxonomy" id="323848"/>
    <lineage>
        <taxon>Bacteria</taxon>
        <taxon>Pseudomonadati</taxon>
        <taxon>Pseudomonadota</taxon>
        <taxon>Betaproteobacteria</taxon>
        <taxon>Nitrosomonadales</taxon>
        <taxon>Nitrosomonadaceae</taxon>
        <taxon>Nitrosospira</taxon>
    </lineage>
</organism>
<keyword id="KW-0031">Aminopeptidase</keyword>
<keyword id="KW-0963">Cytoplasm</keyword>
<keyword id="KW-0378">Hydrolase</keyword>
<keyword id="KW-0464">Manganese</keyword>
<keyword id="KW-0479">Metal-binding</keyword>
<keyword id="KW-0645">Protease</keyword>
<keyword id="KW-1185">Reference proteome</keyword>
<evidence type="ECO:0000255" key="1">
    <source>
        <dbReference type="HAMAP-Rule" id="MF_00181"/>
    </source>
</evidence>
<evidence type="ECO:0000256" key="2">
    <source>
        <dbReference type="SAM" id="MobiDB-lite"/>
    </source>
</evidence>
<dbReference type="EC" id="3.4.11.1" evidence="1"/>
<dbReference type="EC" id="3.4.11.10" evidence="1"/>
<dbReference type="EMBL" id="CP000103">
    <property type="protein sequence ID" value="ABB74053.1"/>
    <property type="molecule type" value="Genomic_DNA"/>
</dbReference>
<dbReference type="RefSeq" id="WP_011380103.1">
    <property type="nucleotide sequence ID" value="NC_007614.1"/>
</dbReference>
<dbReference type="SMR" id="Q2YB18"/>
<dbReference type="STRING" id="323848.Nmul_A0746"/>
<dbReference type="MEROPS" id="M17.003"/>
<dbReference type="KEGG" id="nmu:Nmul_A0746"/>
<dbReference type="eggNOG" id="COG0260">
    <property type="taxonomic scope" value="Bacteria"/>
</dbReference>
<dbReference type="HOGENOM" id="CLU_013734_2_2_4"/>
<dbReference type="OrthoDB" id="9809354at2"/>
<dbReference type="Proteomes" id="UP000002718">
    <property type="component" value="Chromosome"/>
</dbReference>
<dbReference type="GO" id="GO:0005737">
    <property type="term" value="C:cytoplasm"/>
    <property type="evidence" value="ECO:0007669"/>
    <property type="project" value="UniProtKB-SubCell"/>
</dbReference>
<dbReference type="GO" id="GO:0030145">
    <property type="term" value="F:manganese ion binding"/>
    <property type="evidence" value="ECO:0007669"/>
    <property type="project" value="UniProtKB-UniRule"/>
</dbReference>
<dbReference type="GO" id="GO:0070006">
    <property type="term" value="F:metalloaminopeptidase activity"/>
    <property type="evidence" value="ECO:0007669"/>
    <property type="project" value="InterPro"/>
</dbReference>
<dbReference type="GO" id="GO:0006508">
    <property type="term" value="P:proteolysis"/>
    <property type="evidence" value="ECO:0007669"/>
    <property type="project" value="UniProtKB-KW"/>
</dbReference>
<dbReference type="CDD" id="cd00433">
    <property type="entry name" value="Peptidase_M17"/>
    <property type="match status" value="1"/>
</dbReference>
<dbReference type="FunFam" id="3.40.630.10:FF:000004">
    <property type="entry name" value="Probable cytosol aminopeptidase"/>
    <property type="match status" value="1"/>
</dbReference>
<dbReference type="Gene3D" id="3.40.220.10">
    <property type="entry name" value="Leucine Aminopeptidase, subunit E, domain 1"/>
    <property type="match status" value="1"/>
</dbReference>
<dbReference type="Gene3D" id="3.40.630.10">
    <property type="entry name" value="Zn peptidases"/>
    <property type="match status" value="1"/>
</dbReference>
<dbReference type="HAMAP" id="MF_00181">
    <property type="entry name" value="Cytosol_peptidase_M17"/>
    <property type="match status" value="1"/>
</dbReference>
<dbReference type="InterPro" id="IPR011356">
    <property type="entry name" value="Leucine_aapep/pepB"/>
</dbReference>
<dbReference type="InterPro" id="IPR043472">
    <property type="entry name" value="Macro_dom-like"/>
</dbReference>
<dbReference type="InterPro" id="IPR000819">
    <property type="entry name" value="Peptidase_M17_C"/>
</dbReference>
<dbReference type="InterPro" id="IPR023042">
    <property type="entry name" value="Peptidase_M17_leu_NH2_pept"/>
</dbReference>
<dbReference type="InterPro" id="IPR008283">
    <property type="entry name" value="Peptidase_M17_N"/>
</dbReference>
<dbReference type="NCBIfam" id="NF002073">
    <property type="entry name" value="PRK00913.1-2"/>
    <property type="match status" value="1"/>
</dbReference>
<dbReference type="NCBIfam" id="NF002074">
    <property type="entry name" value="PRK00913.1-4"/>
    <property type="match status" value="1"/>
</dbReference>
<dbReference type="NCBIfam" id="NF002077">
    <property type="entry name" value="PRK00913.2-4"/>
    <property type="match status" value="1"/>
</dbReference>
<dbReference type="NCBIfam" id="NF002083">
    <property type="entry name" value="PRK00913.3-5"/>
    <property type="match status" value="1"/>
</dbReference>
<dbReference type="PANTHER" id="PTHR11963:SF23">
    <property type="entry name" value="CYTOSOL AMINOPEPTIDASE"/>
    <property type="match status" value="1"/>
</dbReference>
<dbReference type="PANTHER" id="PTHR11963">
    <property type="entry name" value="LEUCINE AMINOPEPTIDASE-RELATED"/>
    <property type="match status" value="1"/>
</dbReference>
<dbReference type="Pfam" id="PF00883">
    <property type="entry name" value="Peptidase_M17"/>
    <property type="match status" value="1"/>
</dbReference>
<dbReference type="Pfam" id="PF02789">
    <property type="entry name" value="Peptidase_M17_N"/>
    <property type="match status" value="1"/>
</dbReference>
<dbReference type="PRINTS" id="PR00481">
    <property type="entry name" value="LAMNOPPTDASE"/>
</dbReference>
<dbReference type="SUPFAM" id="SSF52949">
    <property type="entry name" value="Macro domain-like"/>
    <property type="match status" value="1"/>
</dbReference>
<dbReference type="SUPFAM" id="SSF53187">
    <property type="entry name" value="Zn-dependent exopeptidases"/>
    <property type="match status" value="1"/>
</dbReference>
<dbReference type="PROSITE" id="PS00631">
    <property type="entry name" value="CYTOSOL_AP"/>
    <property type="match status" value="1"/>
</dbReference>
<reference key="1">
    <citation type="submission" date="2005-08" db="EMBL/GenBank/DDBJ databases">
        <title>Complete sequence of chromosome 1 of Nitrosospira multiformis ATCC 25196.</title>
        <authorList>
            <person name="Copeland A."/>
            <person name="Lucas S."/>
            <person name="Lapidus A."/>
            <person name="Barry K."/>
            <person name="Detter J.C."/>
            <person name="Glavina T."/>
            <person name="Hammon N."/>
            <person name="Israni S."/>
            <person name="Pitluck S."/>
            <person name="Chain P."/>
            <person name="Malfatti S."/>
            <person name="Shin M."/>
            <person name="Vergez L."/>
            <person name="Schmutz J."/>
            <person name="Larimer F."/>
            <person name="Land M."/>
            <person name="Hauser L."/>
            <person name="Kyrpides N."/>
            <person name="Lykidis A."/>
            <person name="Richardson P."/>
        </authorList>
    </citation>
    <scope>NUCLEOTIDE SEQUENCE [LARGE SCALE GENOMIC DNA]</scope>
    <source>
        <strain>ATCC 25196 / NCIMB 11849 / C 71</strain>
    </source>
</reference>
<comment type="function">
    <text evidence="1">Presumably involved in the processing and regular turnover of intracellular proteins. Catalyzes the removal of unsubstituted N-terminal amino acids from various peptides.</text>
</comment>
<comment type="catalytic activity">
    <reaction evidence="1">
        <text>Release of an N-terminal amino acid, Xaa-|-Yaa-, in which Xaa is preferably Leu, but may be other amino acids including Pro although not Arg or Lys, and Yaa may be Pro. Amino acid amides and methyl esters are also readily hydrolyzed, but rates on arylamides are exceedingly low.</text>
        <dbReference type="EC" id="3.4.11.1"/>
    </reaction>
</comment>
<comment type="catalytic activity">
    <reaction evidence="1">
        <text>Release of an N-terminal amino acid, preferentially leucine, but not glutamic or aspartic acids.</text>
        <dbReference type="EC" id="3.4.11.10"/>
    </reaction>
</comment>
<comment type="cofactor">
    <cofactor evidence="1">
        <name>Mn(2+)</name>
        <dbReference type="ChEBI" id="CHEBI:29035"/>
    </cofactor>
    <text evidence="1">Binds 2 manganese ions per subunit.</text>
</comment>
<comment type="subcellular location">
    <subcellularLocation>
        <location evidence="1">Cytoplasm</location>
    </subcellularLocation>
</comment>
<comment type="similarity">
    <text evidence="1">Belongs to the peptidase M17 family.</text>
</comment>